<keyword id="KW-0963">Cytoplasm</keyword>
<keyword id="KW-0489">Methyltransferase</keyword>
<keyword id="KW-0949">S-adenosyl-L-methionine</keyword>
<keyword id="KW-0808">Transferase</keyword>
<accession>Q6HDK9</accession>
<protein>
    <recommendedName>
        <fullName evidence="1">Ribosomal protein L11 methyltransferase</fullName>
        <shortName evidence="1">L11 Mtase</shortName>
        <ecNumber evidence="1">2.1.1.-</ecNumber>
    </recommendedName>
</protein>
<reference key="1">
    <citation type="journal article" date="2006" name="J. Bacteriol.">
        <title>Pathogenomic sequence analysis of Bacillus cereus and Bacillus thuringiensis isolates closely related to Bacillus anthracis.</title>
        <authorList>
            <person name="Han C.S."/>
            <person name="Xie G."/>
            <person name="Challacombe J.F."/>
            <person name="Altherr M.R."/>
            <person name="Bhotika S.S."/>
            <person name="Bruce D."/>
            <person name="Campbell C.S."/>
            <person name="Campbell M.L."/>
            <person name="Chen J."/>
            <person name="Chertkov O."/>
            <person name="Cleland C."/>
            <person name="Dimitrijevic M."/>
            <person name="Doggett N.A."/>
            <person name="Fawcett J.J."/>
            <person name="Glavina T."/>
            <person name="Goodwin L.A."/>
            <person name="Hill K.K."/>
            <person name="Hitchcock P."/>
            <person name="Jackson P.J."/>
            <person name="Keim P."/>
            <person name="Kewalramani A.R."/>
            <person name="Longmire J."/>
            <person name="Lucas S."/>
            <person name="Malfatti S."/>
            <person name="McMurry K."/>
            <person name="Meincke L.J."/>
            <person name="Misra M."/>
            <person name="Moseman B.L."/>
            <person name="Mundt M."/>
            <person name="Munk A.C."/>
            <person name="Okinaka R.T."/>
            <person name="Parson-Quintana B."/>
            <person name="Reilly L.P."/>
            <person name="Richardson P."/>
            <person name="Robinson D.L."/>
            <person name="Rubin E."/>
            <person name="Saunders E."/>
            <person name="Tapia R."/>
            <person name="Tesmer J.G."/>
            <person name="Thayer N."/>
            <person name="Thompson L.S."/>
            <person name="Tice H."/>
            <person name="Ticknor L.O."/>
            <person name="Wills P.L."/>
            <person name="Brettin T.S."/>
            <person name="Gilna P."/>
        </authorList>
    </citation>
    <scope>NUCLEOTIDE SEQUENCE [LARGE SCALE GENOMIC DNA]</scope>
    <source>
        <strain>97-27</strain>
    </source>
</reference>
<comment type="function">
    <text evidence="1">Methylates ribosomal protein L11.</text>
</comment>
<comment type="catalytic activity">
    <reaction evidence="1">
        <text>L-lysyl-[protein] + 3 S-adenosyl-L-methionine = N(6),N(6),N(6)-trimethyl-L-lysyl-[protein] + 3 S-adenosyl-L-homocysteine + 3 H(+)</text>
        <dbReference type="Rhea" id="RHEA:54192"/>
        <dbReference type="Rhea" id="RHEA-COMP:9752"/>
        <dbReference type="Rhea" id="RHEA-COMP:13826"/>
        <dbReference type="ChEBI" id="CHEBI:15378"/>
        <dbReference type="ChEBI" id="CHEBI:29969"/>
        <dbReference type="ChEBI" id="CHEBI:57856"/>
        <dbReference type="ChEBI" id="CHEBI:59789"/>
        <dbReference type="ChEBI" id="CHEBI:61961"/>
    </reaction>
</comment>
<comment type="subcellular location">
    <subcellularLocation>
        <location evidence="1">Cytoplasm</location>
    </subcellularLocation>
</comment>
<comment type="similarity">
    <text evidence="1">Belongs to the methyltransferase superfamily. PrmA family.</text>
</comment>
<name>PRMA_BACHK</name>
<proteinExistence type="inferred from homology"/>
<feature type="chain" id="PRO_0000192237" description="Ribosomal protein L11 methyltransferase">
    <location>
        <begin position="1"/>
        <end position="312"/>
    </location>
</feature>
<feature type="binding site" evidence="1">
    <location>
        <position position="162"/>
    </location>
    <ligand>
        <name>S-adenosyl-L-methionine</name>
        <dbReference type="ChEBI" id="CHEBI:59789"/>
    </ligand>
</feature>
<feature type="binding site" evidence="1">
    <location>
        <position position="183"/>
    </location>
    <ligand>
        <name>S-adenosyl-L-methionine</name>
        <dbReference type="ChEBI" id="CHEBI:59789"/>
    </ligand>
</feature>
<feature type="binding site" evidence="1">
    <location>
        <position position="205"/>
    </location>
    <ligand>
        <name>S-adenosyl-L-methionine</name>
        <dbReference type="ChEBI" id="CHEBI:59789"/>
    </ligand>
</feature>
<feature type="binding site" evidence="1">
    <location>
        <position position="248"/>
    </location>
    <ligand>
        <name>S-adenosyl-L-methionine</name>
        <dbReference type="ChEBI" id="CHEBI:59789"/>
    </ligand>
</feature>
<organism>
    <name type="scientific">Bacillus thuringiensis subsp. konkukian (strain 97-27)</name>
    <dbReference type="NCBI Taxonomy" id="281309"/>
    <lineage>
        <taxon>Bacteria</taxon>
        <taxon>Bacillati</taxon>
        <taxon>Bacillota</taxon>
        <taxon>Bacilli</taxon>
        <taxon>Bacillales</taxon>
        <taxon>Bacillaceae</taxon>
        <taxon>Bacillus</taxon>
        <taxon>Bacillus cereus group</taxon>
    </lineage>
</organism>
<evidence type="ECO:0000255" key="1">
    <source>
        <dbReference type="HAMAP-Rule" id="MF_00735"/>
    </source>
</evidence>
<dbReference type="EC" id="2.1.1.-" evidence="1"/>
<dbReference type="EMBL" id="AE017355">
    <property type="protein sequence ID" value="AAT63522.1"/>
    <property type="molecule type" value="Genomic_DNA"/>
</dbReference>
<dbReference type="RefSeq" id="WP_000872105.1">
    <property type="nucleotide sequence ID" value="NC_005957.1"/>
</dbReference>
<dbReference type="RefSeq" id="YP_038367.1">
    <property type="nucleotide sequence ID" value="NC_005957.1"/>
</dbReference>
<dbReference type="SMR" id="Q6HDK9"/>
<dbReference type="GeneID" id="45024189"/>
<dbReference type="KEGG" id="btk:BT9727_4049"/>
<dbReference type="PATRIC" id="fig|281309.8.peg.4321"/>
<dbReference type="HOGENOM" id="CLU_049382_0_1_9"/>
<dbReference type="Proteomes" id="UP000001301">
    <property type="component" value="Chromosome"/>
</dbReference>
<dbReference type="GO" id="GO:0005737">
    <property type="term" value="C:cytoplasm"/>
    <property type="evidence" value="ECO:0007669"/>
    <property type="project" value="UniProtKB-SubCell"/>
</dbReference>
<dbReference type="GO" id="GO:0016279">
    <property type="term" value="F:protein-lysine N-methyltransferase activity"/>
    <property type="evidence" value="ECO:0007669"/>
    <property type="project" value="RHEA"/>
</dbReference>
<dbReference type="GO" id="GO:0032259">
    <property type="term" value="P:methylation"/>
    <property type="evidence" value="ECO:0007669"/>
    <property type="project" value="UniProtKB-KW"/>
</dbReference>
<dbReference type="CDD" id="cd02440">
    <property type="entry name" value="AdoMet_MTases"/>
    <property type="match status" value="1"/>
</dbReference>
<dbReference type="Gene3D" id="3.40.50.150">
    <property type="entry name" value="Vaccinia Virus protein VP39"/>
    <property type="match status" value="1"/>
</dbReference>
<dbReference type="HAMAP" id="MF_00735">
    <property type="entry name" value="Methyltr_PrmA"/>
    <property type="match status" value="1"/>
</dbReference>
<dbReference type="InterPro" id="IPR050078">
    <property type="entry name" value="Ribosomal_L11_MeTrfase_PrmA"/>
</dbReference>
<dbReference type="InterPro" id="IPR004498">
    <property type="entry name" value="Ribosomal_PrmA_MeTrfase"/>
</dbReference>
<dbReference type="InterPro" id="IPR029063">
    <property type="entry name" value="SAM-dependent_MTases_sf"/>
</dbReference>
<dbReference type="NCBIfam" id="TIGR00406">
    <property type="entry name" value="prmA"/>
    <property type="match status" value="1"/>
</dbReference>
<dbReference type="PANTHER" id="PTHR43648">
    <property type="entry name" value="ELECTRON TRANSFER FLAVOPROTEIN BETA SUBUNIT LYSINE METHYLTRANSFERASE"/>
    <property type="match status" value="1"/>
</dbReference>
<dbReference type="PANTHER" id="PTHR43648:SF1">
    <property type="entry name" value="ELECTRON TRANSFER FLAVOPROTEIN BETA SUBUNIT LYSINE METHYLTRANSFERASE"/>
    <property type="match status" value="1"/>
</dbReference>
<dbReference type="Pfam" id="PF06325">
    <property type="entry name" value="PrmA"/>
    <property type="match status" value="1"/>
</dbReference>
<dbReference type="PIRSF" id="PIRSF000401">
    <property type="entry name" value="RPL11_MTase"/>
    <property type="match status" value="1"/>
</dbReference>
<dbReference type="SUPFAM" id="SSF53335">
    <property type="entry name" value="S-adenosyl-L-methionine-dependent methyltransferases"/>
    <property type="match status" value="1"/>
</dbReference>
<gene>
    <name evidence="1" type="primary">prmA</name>
    <name type="ordered locus">BT9727_4049</name>
</gene>
<sequence>MKWSEISIHTTEEAVEAVSHILHEAGASGVAIEDPAELTKEREQQYGEIYALNPDEYPAEGVLIKAYFPQTDSLHETIAGVKSSIDVLPSYDIEIGTGNITVNEVNEEDWATAWKKYYHPVQISDTFTIVPTWEEYTPSSPEEKIIELDPGMAFGTGTHPTTTMCIRALEKTVQPGDTIIDVGTGSGVLSIAAAKLGASSVQAYDLDPVAVESAEMNVRLNKTDDVVSVGQNSLLEGIEGPVDLIVANLLAEIILLFPEDAARVVKSGGLFITSGIIAAKEKVISEALEKAGFTIEEVLRMEDWVAIIARNA</sequence>